<gene>
    <name type="primary">IL2RA</name>
</gene>
<protein>
    <recommendedName>
        <fullName>Interleukin-2 receptor subunit alpha</fullName>
        <shortName>IL-2 receptor subunit alpha</shortName>
        <shortName>IL-2-RA</shortName>
        <shortName>IL-2R subunit alpha</shortName>
        <shortName>IL2-RA</shortName>
    </recommendedName>
    <cdAntigenName>CD25</cdAntigenName>
</protein>
<reference key="1">
    <citation type="journal article" date="2005" name="Dev. Comp. Immunol.">
        <title>Cloning, sequencing and characterization of lentiviral-mediated expression of rhesus macaque (Macaca mulatta) interleukin-2 receptor alpha cDNA.</title>
        <authorList>
            <person name="Silvertown J.D."/>
            <person name="Walia J.S."/>
            <person name="Medin J.A."/>
        </authorList>
    </citation>
    <scope>NUCLEOTIDE SEQUENCE [MRNA]</scope>
</reference>
<feature type="signal peptide" evidence="1">
    <location>
        <begin position="1"/>
        <end position="21"/>
    </location>
</feature>
<feature type="chain" id="PRO_0000011025" description="Interleukin-2 receptor subunit alpha">
    <location>
        <begin position="22"/>
        <end position="272"/>
    </location>
</feature>
<feature type="topological domain" description="Extracellular" evidence="3">
    <location>
        <begin position="22"/>
        <end position="240"/>
    </location>
</feature>
<feature type="transmembrane region" description="Helical" evidence="3">
    <location>
        <begin position="241"/>
        <end position="259"/>
    </location>
</feature>
<feature type="topological domain" description="Cytoplasmic" evidence="3">
    <location>
        <begin position="260"/>
        <end position="272"/>
    </location>
</feature>
<feature type="domain" description="Sushi 1" evidence="4">
    <location>
        <begin position="22"/>
        <end position="84"/>
    </location>
</feature>
<feature type="domain" description="Sushi 2" evidence="4">
    <location>
        <begin position="123"/>
        <end position="186"/>
    </location>
</feature>
<feature type="region of interest" description="Disordered" evidence="5">
    <location>
        <begin position="87"/>
        <end position="109"/>
    </location>
</feature>
<feature type="region of interest" description="Disordered" evidence="5">
    <location>
        <begin position="186"/>
        <end position="213"/>
    </location>
</feature>
<feature type="compositionally biased region" description="Polar residues" evidence="5">
    <location>
        <begin position="87"/>
        <end position="98"/>
    </location>
</feature>
<feature type="glycosylation site" description="N-linked (GlcNAc...) asparagine" evidence="3">
    <location>
        <position position="70"/>
    </location>
</feature>
<feature type="glycosylation site" description="N-linked (GlcNAc...) asparagine" evidence="3">
    <location>
        <position position="89"/>
    </location>
</feature>
<feature type="disulfide bond" evidence="4">
    <location>
        <begin position="24"/>
        <end position="67"/>
    </location>
</feature>
<feature type="disulfide bond" evidence="4">
    <location>
        <begin position="49"/>
        <end position="80"/>
    </location>
</feature>
<feature type="disulfide bond" evidence="4">
    <location>
        <begin position="51"/>
        <end position="82"/>
    </location>
</feature>
<feature type="disulfide bond" evidence="4">
    <location>
        <begin position="125"/>
        <end position="168"/>
    </location>
</feature>
<feature type="disulfide bond" evidence="4">
    <location>
        <begin position="152"/>
        <end position="184"/>
    </location>
</feature>
<dbReference type="EMBL" id="AY693777">
    <property type="protein sequence ID" value="AAV49318.1"/>
    <property type="molecule type" value="mRNA"/>
</dbReference>
<dbReference type="RefSeq" id="NP_001028089.1">
    <property type="nucleotide sequence ID" value="NM_001032917.2"/>
</dbReference>
<dbReference type="SMR" id="Q5MNY4"/>
<dbReference type="FunCoup" id="Q5MNY4">
    <property type="interactions" value="1019"/>
</dbReference>
<dbReference type="STRING" id="9544.ENSMMUP00000019861"/>
<dbReference type="GlyCosmos" id="Q5MNY4">
    <property type="glycosylation" value="2 sites, No reported glycans"/>
</dbReference>
<dbReference type="PaxDb" id="9544-ENSMMUP00000036344"/>
<dbReference type="GeneID" id="574300"/>
<dbReference type="KEGG" id="mcc:574300"/>
<dbReference type="CTD" id="3559"/>
<dbReference type="eggNOG" id="ENOG502SUAG">
    <property type="taxonomic scope" value="Eukaryota"/>
</dbReference>
<dbReference type="InParanoid" id="Q5MNY4"/>
<dbReference type="OrthoDB" id="9833060at2759"/>
<dbReference type="Proteomes" id="UP000006718">
    <property type="component" value="Unassembled WGS sequence"/>
</dbReference>
<dbReference type="GO" id="GO:0016020">
    <property type="term" value="C:membrane"/>
    <property type="evidence" value="ECO:0007669"/>
    <property type="project" value="UniProtKB-SubCell"/>
</dbReference>
<dbReference type="GO" id="GO:0019976">
    <property type="term" value="F:interleukin-2 binding"/>
    <property type="evidence" value="ECO:0000318"/>
    <property type="project" value="GO_Central"/>
</dbReference>
<dbReference type="GO" id="GO:0004911">
    <property type="term" value="F:interleukin-2 receptor activity"/>
    <property type="evidence" value="ECO:0007669"/>
    <property type="project" value="InterPro"/>
</dbReference>
<dbReference type="GO" id="GO:0002376">
    <property type="term" value="P:immune system process"/>
    <property type="evidence" value="ECO:0007669"/>
    <property type="project" value="UniProtKB-KW"/>
</dbReference>
<dbReference type="GO" id="GO:0006954">
    <property type="term" value="P:inflammatory response"/>
    <property type="evidence" value="ECO:0000318"/>
    <property type="project" value="GO_Central"/>
</dbReference>
<dbReference type="CDD" id="cd00033">
    <property type="entry name" value="CCP"/>
    <property type="match status" value="1"/>
</dbReference>
<dbReference type="FunFam" id="2.10.70.10:FF:000156">
    <property type="entry name" value="Interleukin-2 receptor subunit alpha"/>
    <property type="match status" value="1"/>
</dbReference>
<dbReference type="FunFam" id="2.20.28.230:FF:000002">
    <property type="entry name" value="Interleukin-2 receptor subunit alpha"/>
    <property type="match status" value="1"/>
</dbReference>
<dbReference type="FunFam" id="2.20.28.230:FF:000003">
    <property type="entry name" value="Interleukin-2 receptor subunit alpha"/>
    <property type="match status" value="1"/>
</dbReference>
<dbReference type="FunFam" id="2.20.28.230:FF:000004">
    <property type="entry name" value="Interleukin-2 receptor subunit alpha"/>
    <property type="match status" value="1"/>
</dbReference>
<dbReference type="Gene3D" id="2.20.28.230">
    <property type="match status" value="3"/>
</dbReference>
<dbReference type="InterPro" id="IPR015486">
    <property type="entry name" value="IL-2_rcpt_alpha"/>
</dbReference>
<dbReference type="InterPro" id="IPR035976">
    <property type="entry name" value="Sushi/SCR/CCP_sf"/>
</dbReference>
<dbReference type="InterPro" id="IPR000436">
    <property type="entry name" value="Sushi_SCR_CCP_dom"/>
</dbReference>
<dbReference type="PANTHER" id="PTHR10573">
    <property type="entry name" value="INTERLEUKIN-2 RECEPTOR ALPHA CHAIN"/>
    <property type="match status" value="1"/>
</dbReference>
<dbReference type="PANTHER" id="PTHR10573:SF0">
    <property type="entry name" value="INTERLEUKIN-2 RECEPTOR SUBUNIT ALPHA"/>
    <property type="match status" value="1"/>
</dbReference>
<dbReference type="Pfam" id="PF00084">
    <property type="entry name" value="Sushi"/>
    <property type="match status" value="1"/>
</dbReference>
<dbReference type="SMART" id="SM00032">
    <property type="entry name" value="CCP"/>
    <property type="match status" value="2"/>
</dbReference>
<dbReference type="SUPFAM" id="SSF57535">
    <property type="entry name" value="Complement control module/SCR domain"/>
    <property type="match status" value="2"/>
</dbReference>
<dbReference type="PROSITE" id="PS50923">
    <property type="entry name" value="SUSHI"/>
    <property type="match status" value="2"/>
</dbReference>
<name>IL2RA_MACMU</name>
<proteinExistence type="evidence at transcript level"/>
<keyword id="KW-1015">Disulfide bond</keyword>
<keyword id="KW-0325">Glycoprotein</keyword>
<keyword id="KW-0391">Immunity</keyword>
<keyword id="KW-0472">Membrane</keyword>
<keyword id="KW-0675">Receptor</keyword>
<keyword id="KW-1185">Reference proteome</keyword>
<keyword id="KW-0677">Repeat</keyword>
<keyword id="KW-0732">Signal</keyword>
<keyword id="KW-0768">Sushi</keyword>
<keyword id="KW-0812">Transmembrane</keyword>
<keyword id="KW-1133">Transmembrane helix</keyword>
<sequence>MDPYLLMWGLLTFITVPGCQAELCDDDPPKITHATFKAVAYKEGTMLNCECKRGFRRIKSGSPYMLCTGNSSHSSWDNQCQCTSSAARNTTKQVTPQPEEQKERKTTEMQSQMQLADQVSLPGHCREPPPWENEATERIYHFVVGQMVYYQCVQGYRALHRGPAESICKMTHGKTRWTQPQLICTGETEPSQFPGEEEPQASPDGLPESETSRLVTTTDFRIQTEVAATMETFIFTTEYQVAVAGCVFLLISVLLLSGLTWQRRQRKNRRTI</sequence>
<organism>
    <name type="scientific">Macaca mulatta</name>
    <name type="common">Rhesus macaque</name>
    <dbReference type="NCBI Taxonomy" id="9544"/>
    <lineage>
        <taxon>Eukaryota</taxon>
        <taxon>Metazoa</taxon>
        <taxon>Chordata</taxon>
        <taxon>Craniata</taxon>
        <taxon>Vertebrata</taxon>
        <taxon>Euteleostomi</taxon>
        <taxon>Mammalia</taxon>
        <taxon>Eutheria</taxon>
        <taxon>Euarchontoglires</taxon>
        <taxon>Primates</taxon>
        <taxon>Haplorrhini</taxon>
        <taxon>Catarrhini</taxon>
        <taxon>Cercopithecidae</taxon>
        <taxon>Cercopithecinae</taxon>
        <taxon>Macaca</taxon>
    </lineage>
</organism>
<comment type="function">
    <text evidence="2">Receptor for interleukin-2. The receptor is involved in the regulation of immune tolerance by controlling regulatory T cells (TREGs) activity. TREGs suppress the activation and expansion of autoreactive T-cells.</text>
</comment>
<comment type="subunit">
    <text evidence="1">Non-covalent dimer of an alpha and a beta subunit. IL2R exists in 3 different forms: a high affinity dimer, an intermediate affinity monomer (beta subunit), and a low affinity monomer (alpha subunit). The high and intermediate affinity forms also associate with a gamma subunit (By similarity).</text>
</comment>
<comment type="subcellular location">
    <subcellularLocation>
        <location>Membrane</location>
        <topology>Single-pass type I membrane protein</topology>
    </subcellularLocation>
</comment>
<accession>Q5MNY4</accession>
<evidence type="ECO:0000250" key="1"/>
<evidence type="ECO:0000250" key="2">
    <source>
        <dbReference type="UniProtKB" id="P01589"/>
    </source>
</evidence>
<evidence type="ECO:0000255" key="3"/>
<evidence type="ECO:0000255" key="4">
    <source>
        <dbReference type="PROSITE-ProRule" id="PRU00302"/>
    </source>
</evidence>
<evidence type="ECO:0000256" key="5">
    <source>
        <dbReference type="SAM" id="MobiDB-lite"/>
    </source>
</evidence>